<organism>
    <name type="scientific">Synechocystis sp. (strain ATCC 27184 / PCC 6803 / Kazusa)</name>
    <dbReference type="NCBI Taxonomy" id="1111708"/>
    <lineage>
        <taxon>Bacteria</taxon>
        <taxon>Bacillati</taxon>
        <taxon>Cyanobacteriota</taxon>
        <taxon>Cyanophyceae</taxon>
        <taxon>Synechococcales</taxon>
        <taxon>Merismopediaceae</taxon>
        <taxon>Synechocystis</taxon>
    </lineage>
</organism>
<accession>P74721</accession>
<comment type="function">
    <text evidence="3 4">Active on a wide variety of primary alcohols and their corresponding aldehydes, but not against ketones nor secondary alcohols. Active on aliphatic compounds up to 5 carbons in length and aromatic alcohols, less effective on branched-chain primary alcohols. Prefers NADPH to NADH. Its catalytic efficiency is greatest for aldehydes, suggesting the reduction of aromatic and medium-chain aliphatic aldehydes is its in vivo activity (PubMed:19411329). Plays a role in tolerance to internally produced ethanol (PubMed:28160048).</text>
</comment>
<comment type="catalytic activity">
    <reaction evidence="3">
        <text>a primary alcohol + NADP(+) = an aldehyde + NADPH + H(+)</text>
        <dbReference type="Rhea" id="RHEA:15937"/>
        <dbReference type="ChEBI" id="CHEBI:15378"/>
        <dbReference type="ChEBI" id="CHEBI:15734"/>
        <dbReference type="ChEBI" id="CHEBI:17478"/>
        <dbReference type="ChEBI" id="CHEBI:57783"/>
        <dbReference type="ChEBI" id="CHEBI:58349"/>
        <dbReference type="EC" id="1.1.1.2"/>
    </reaction>
    <physiologicalReaction direction="left-to-right" evidence="3">
        <dbReference type="Rhea" id="RHEA:15938"/>
    </physiologicalReaction>
    <physiologicalReaction direction="right-to-left" evidence="3">
        <dbReference type="Rhea" id="RHEA:15939"/>
    </physiologicalReaction>
</comment>
<comment type="cofactor">
    <cofactor evidence="3">
        <name>Zn(2+)</name>
        <dbReference type="ChEBI" id="CHEBI:29105"/>
    </cofactor>
    <text evidence="3">Zn(2+) and Co(2+) are equally efficient in vitro, Fe(2+) is less efficient.</text>
</comment>
<comment type="biophysicochemical properties">
    <kinetics>
        <KM evidence="3">0.51 mM for acetaldehyde</KM>
        <KM evidence="3">0.11 mM for butanal</KM>
        <KM evidence="3">0.075 mM for pentanal</KM>
        <KM evidence="3">0.017 mM for cinnamaldehyde</KM>
        <KM evidence="3">18.8 mM for ethanol</KM>
        <KM evidence="3">3.28 mM for butanol</KM>
        <KM evidence="3">1.54 mM for pentanol</KM>
        <KM evidence="3">0.27 mM for cinnamyl alcohol</KM>
        <KM evidence="3">0.025 mM for NADPH</KM>
        <KM evidence="3">0.05 mM for NADP(+)</KM>
        <KM evidence="3">1.31 mM for NADH</KM>
        <KM evidence="3">9.7 mM for NAD(+)</KM>
        <text evidence="3">kcat is 9458 min(-1) for aceteldehyde. kcat is 9398 min(-1) for butanal. kcat is 9547 min(-1) for pentanal. kcat is 6475 min(-1) for cinnamaldehyde. kcat is 1641 min(-1) for ethanol. kcat is 1023 min(-1) for butanol. kcat is 789 min(-1) for pentanol. kcat is 3647 min(-1) for cinnamyl alcohol.</text>
    </kinetics>
</comment>
<comment type="subunit">
    <text evidence="8">Homotetramer.</text>
</comment>
<comment type="subcellular location">
    <subcellularLocation>
        <location evidence="8">Cytoplasm</location>
    </subcellularLocation>
</comment>
<comment type="induction">
    <text evidence="2 3">Induced by salt stress (0.5 M NaCl) under control of rre1 and hik34 (PubMed:15805106). Transcription induced by 0.5 M NaCl, 0.5 M sorbitol, heat shock (45 degrees Celsius) and benzyl alcohol (a membrane fluidifier) but not H(2)O(2) or high-light treatment; the induction kinetics are not all the same. Response to all stresses is mediated (in part) by two-component system rre1 and hik34. Expressed at a low constitutive level, protein levels increase 2 hours after sorbitol exposure and 8 hours after NaCl exposure (at protein level). Protein levels do not change upon heat shock (followed for 24 hours) (PubMed:19411329).</text>
</comment>
<comment type="disruption phenotype">
    <text evidence="4">Unable to grow heterotrophically on glucose in the dark. Cells photobleach and have significantly reduced survival in 4% ethanol, reduced tolerance to internally produced ethanol.</text>
</comment>
<comment type="biotechnology">
    <text evidence="5">Can be used to make bioethanol by insertion of a cassette with Z.mobilis pyruvate decarboxylase and endogenous adhA (this gene) into 2 loci (slr0168 and phaAB). Up to 5.5 g/L, 212 mg/L/day, of ethanol can be produced.</text>
</comment>
<comment type="similarity">
    <text evidence="7">Belongs to the zinc-containing alcohol dehydrogenase family.</text>
</comment>
<sequence length="336" mass="35868">MIKAYAALEANGKLQPFEYDPGALGANEVEIEVQYCGVCHSDLSMINNEWGISNYPLVPGHEVVGTVAAMGEGVNHVEVGDLVGLGWHSGYCMTCHSCLSGYHNLCATAESTIVGHYGGFGDRVRAKGVSVVKLPKGIDLASAGPLFCGGITVFSPMVELSLKPTAKVAVIGIGGLGHLAVQFLRAWGCEVTAFTSSARKQTEVLELGAHHILDSTNPEAIASAEGKFDYIISTVNLKLDWNLYISTLAPQGHFHFVGVVLEPLDLNLFPLLMGQRSVSASPVGSPATIATMLDFAVRHDIKPVVEQFSFDQINEAIAHLESGKAHYRVVLSHSKN</sequence>
<protein>
    <recommendedName>
        <fullName evidence="7">Aldehyde reductase AdhA</fullName>
        <ecNumber evidence="3">1.1.1.2</ecNumber>
    </recommendedName>
    <alternativeName>
        <fullName evidence="6">Alcohol dehydrogenase AdhA</fullName>
    </alternativeName>
</protein>
<dbReference type="EC" id="1.1.1.2" evidence="3"/>
<dbReference type="EMBL" id="BA000022">
    <property type="protein sequence ID" value="BAA18840.1"/>
    <property type="molecule type" value="Genomic_DNA"/>
</dbReference>
<dbReference type="PIR" id="S76928">
    <property type="entry name" value="S76928"/>
</dbReference>
<dbReference type="SMR" id="P74721"/>
<dbReference type="FunCoup" id="P74721">
    <property type="interactions" value="332"/>
</dbReference>
<dbReference type="IntAct" id="P74721">
    <property type="interactions" value="3"/>
</dbReference>
<dbReference type="STRING" id="1148.gene:10500612"/>
<dbReference type="PaxDb" id="1148-1653930"/>
<dbReference type="EnsemblBacteria" id="BAA18840">
    <property type="protein sequence ID" value="BAA18840"/>
    <property type="gene ID" value="BAA18840"/>
</dbReference>
<dbReference type="KEGG" id="syn:slr1192"/>
<dbReference type="eggNOG" id="COG1064">
    <property type="taxonomic scope" value="Bacteria"/>
</dbReference>
<dbReference type="InParanoid" id="P74721"/>
<dbReference type="PhylomeDB" id="P74721"/>
<dbReference type="BRENDA" id="1.1.1.1">
    <property type="organism ID" value="6192"/>
</dbReference>
<dbReference type="Proteomes" id="UP000001425">
    <property type="component" value="Chromosome"/>
</dbReference>
<dbReference type="GO" id="GO:0005737">
    <property type="term" value="C:cytoplasm"/>
    <property type="evidence" value="ECO:0007669"/>
    <property type="project" value="UniProtKB-SubCell"/>
</dbReference>
<dbReference type="GO" id="GO:0008106">
    <property type="term" value="F:alcohol dehydrogenase (NADP+) activity"/>
    <property type="evidence" value="ECO:0007669"/>
    <property type="project" value="UniProtKB-EC"/>
</dbReference>
<dbReference type="GO" id="GO:0016616">
    <property type="term" value="F:oxidoreductase activity, acting on the CH-OH group of donors, NAD or NADP as acceptor"/>
    <property type="evidence" value="ECO:0000318"/>
    <property type="project" value="GO_Central"/>
</dbReference>
<dbReference type="GO" id="GO:0008270">
    <property type="term" value="F:zinc ion binding"/>
    <property type="evidence" value="ECO:0007669"/>
    <property type="project" value="InterPro"/>
</dbReference>
<dbReference type="CDD" id="cd05283">
    <property type="entry name" value="CAD1"/>
    <property type="match status" value="1"/>
</dbReference>
<dbReference type="FunFam" id="3.40.50.720:FF:000022">
    <property type="entry name" value="Cinnamyl alcohol dehydrogenase"/>
    <property type="match status" value="1"/>
</dbReference>
<dbReference type="FunFam" id="3.90.180.10:FF:000018">
    <property type="entry name" value="NAD(P)-dependent alcohol dehydrogenase"/>
    <property type="match status" value="1"/>
</dbReference>
<dbReference type="Gene3D" id="3.90.180.10">
    <property type="entry name" value="Medium-chain alcohol dehydrogenases, catalytic domain"/>
    <property type="match status" value="1"/>
</dbReference>
<dbReference type="Gene3D" id="3.40.50.720">
    <property type="entry name" value="NAD(P)-binding Rossmann-like Domain"/>
    <property type="match status" value="1"/>
</dbReference>
<dbReference type="InterPro" id="IPR013149">
    <property type="entry name" value="ADH-like_C"/>
</dbReference>
<dbReference type="InterPro" id="IPR013154">
    <property type="entry name" value="ADH-like_N"/>
</dbReference>
<dbReference type="InterPro" id="IPR002328">
    <property type="entry name" value="ADH_Zn_CS"/>
</dbReference>
<dbReference type="InterPro" id="IPR047109">
    <property type="entry name" value="CAD-like"/>
</dbReference>
<dbReference type="InterPro" id="IPR011032">
    <property type="entry name" value="GroES-like_sf"/>
</dbReference>
<dbReference type="InterPro" id="IPR036291">
    <property type="entry name" value="NAD(P)-bd_dom_sf"/>
</dbReference>
<dbReference type="InterPro" id="IPR020843">
    <property type="entry name" value="PKS_ER"/>
</dbReference>
<dbReference type="PANTHER" id="PTHR42683">
    <property type="entry name" value="ALDEHYDE REDUCTASE"/>
    <property type="match status" value="1"/>
</dbReference>
<dbReference type="Pfam" id="PF08240">
    <property type="entry name" value="ADH_N"/>
    <property type="match status" value="1"/>
</dbReference>
<dbReference type="Pfam" id="PF00107">
    <property type="entry name" value="ADH_zinc_N"/>
    <property type="match status" value="1"/>
</dbReference>
<dbReference type="SMART" id="SM00829">
    <property type="entry name" value="PKS_ER"/>
    <property type="match status" value="1"/>
</dbReference>
<dbReference type="SUPFAM" id="SSF50129">
    <property type="entry name" value="GroES-like"/>
    <property type="match status" value="1"/>
</dbReference>
<dbReference type="SUPFAM" id="SSF51735">
    <property type="entry name" value="NAD(P)-binding Rossmann-fold domains"/>
    <property type="match status" value="1"/>
</dbReference>
<dbReference type="PROSITE" id="PS00059">
    <property type="entry name" value="ADH_ZINC"/>
    <property type="match status" value="1"/>
</dbReference>
<evidence type="ECO:0000250" key="1">
    <source>
        <dbReference type="UniProtKB" id="P75691"/>
    </source>
</evidence>
<evidence type="ECO:0000269" key="2">
    <source>
    </source>
</evidence>
<evidence type="ECO:0000269" key="3">
    <source>
    </source>
</evidence>
<evidence type="ECO:0000269" key="4">
    <source>
    </source>
</evidence>
<evidence type="ECO:0000269" key="5">
    <source ref="4"/>
</evidence>
<evidence type="ECO:0000303" key="6">
    <source>
    </source>
</evidence>
<evidence type="ECO:0000305" key="7"/>
<evidence type="ECO:0000305" key="8">
    <source>
    </source>
</evidence>
<evidence type="ECO:0000312" key="9">
    <source>
        <dbReference type="EMBL" id="BAA18840.1"/>
    </source>
</evidence>
<reference key="1">
    <citation type="journal article" date="1996" name="DNA Res.">
        <title>Sequence analysis of the genome of the unicellular cyanobacterium Synechocystis sp. strain PCC6803. II. Sequence determination of the entire genome and assignment of potential protein-coding regions.</title>
        <authorList>
            <person name="Kaneko T."/>
            <person name="Sato S."/>
            <person name="Kotani H."/>
            <person name="Tanaka A."/>
            <person name="Asamizu E."/>
            <person name="Nakamura Y."/>
            <person name="Miyajima N."/>
            <person name="Hirosawa M."/>
            <person name="Sugiura M."/>
            <person name="Sasamoto S."/>
            <person name="Kimura T."/>
            <person name="Hosouchi T."/>
            <person name="Matsuno A."/>
            <person name="Muraki A."/>
            <person name="Nakazaki N."/>
            <person name="Naruo K."/>
            <person name="Okumura S."/>
            <person name="Shimpo S."/>
            <person name="Takeuchi C."/>
            <person name="Wada T."/>
            <person name="Watanabe A."/>
            <person name="Yamada M."/>
            <person name="Yasuda M."/>
            <person name="Tabata S."/>
        </authorList>
    </citation>
    <scope>NUCLEOTIDE SEQUENCE [LARGE SCALE GENOMIC DNA]</scope>
    <source>
        <strain>ATCC 27184 / PCC 6803 / Kazusa</strain>
    </source>
</reference>
<reference key="2">
    <citation type="journal article" date="2005" name="J. Biol. Chem.">
        <title>Identical Hik-Rre systems are involved in perception and transduction of salt signals and hyperosmotic signals but regulate the expression of individual genes to different extents in synechocystis.</title>
        <authorList>
            <person name="Shoumskaya M.A."/>
            <person name="Paithoonrangsarid K."/>
            <person name="Kanesaki Y."/>
            <person name="Los D.A."/>
            <person name="Zinchenko V.V."/>
            <person name="Tanticharoen M."/>
            <person name="Suzuki I."/>
            <person name="Murata N."/>
        </authorList>
    </citation>
    <scope>INDUCTION</scope>
    <source>
        <strain>ATCC 27184 / PCC 6803 / Kazusa</strain>
    </source>
</reference>
<reference key="3">
    <citation type="journal article" date="2009" name="J. Bacteriol.">
        <title>Characterization of an alcohol dehydrogenase from the Cyanobacterium Synechocystis sp. strain PCC 6803 that responds to environmental stress conditions via the Hik34-Rre1 two-component system.</title>
        <authorList>
            <person name="Vidal R."/>
            <person name="Lopez-Maury L."/>
            <person name="Guerrero M.G."/>
            <person name="Florencio F.J."/>
        </authorList>
    </citation>
    <scope>FUNCTION</scope>
    <scope>CATALYTIC ACTIVITY</scope>
    <scope>SUBSTRATE SPECIFICITY</scope>
    <scope>COFACTOR</scope>
    <scope>BIOPHYSICOCHEMICAL PROPERTIES</scope>
    <scope>SUBUNIT</scope>
    <scope>SUBCELLULAR LOCATION</scope>
    <scope>INDUCTION BY STRESS</scope>
    <source>
        <strain>ATCC 27184 / PCC 6803 / Kazusa</strain>
    </source>
</reference>
<reference key="4">
    <citation type="journal article" date="2012" name="Energy Environ. Sci.">
        <title>Photosynthetic production of ethanol from carbon dioxide in genetically engineered cyanobacteria.</title>
        <authorList>
            <person name="Gao Z."/>
            <person name="Zhao H."/>
            <person name="Li Z."/>
            <person name="Tan X."/>
            <person name="Lu X."/>
        </authorList>
    </citation>
    <scope>BIOTECHNOLOGY</scope>
</reference>
<reference key="5">
    <citation type="journal article" date="2017" name="Appl. Microbiol. Biotechnol.">
        <title>Alcohol dehydrogenase AdhA plays a role in ethanol tolerance in model cyanobacterium Synechocystis sp. PCC 6803.</title>
        <authorList>
            <person name="Vidal R."/>
        </authorList>
    </citation>
    <scope>FUNCTION</scope>
    <scope>DISRUPTION PHENOTYPE</scope>
    <source>
        <strain>ATCC 27184 / PCC 6803 / Kazusa</strain>
    </source>
</reference>
<keyword id="KW-0963">Cytoplasm</keyword>
<keyword id="KW-0479">Metal-binding</keyword>
<keyword id="KW-0521">NADP</keyword>
<keyword id="KW-0560">Oxidoreductase</keyword>
<keyword id="KW-1185">Reference proteome</keyword>
<keyword id="KW-0862">Zinc</keyword>
<feature type="chain" id="PRO_0000453144" description="Aldehyde reductase AdhA">
    <location>
        <begin position="1"/>
        <end position="336"/>
    </location>
</feature>
<feature type="binding site" evidence="1">
    <location>
        <position position="36"/>
    </location>
    <ligand>
        <name>Zn(2+)</name>
        <dbReference type="ChEBI" id="CHEBI:29105"/>
        <label>1</label>
        <note>catalytic</note>
    </ligand>
</feature>
<feature type="binding site" evidence="1">
    <location>
        <position position="39"/>
    </location>
    <ligand>
        <name>Zn(2+)</name>
        <dbReference type="ChEBI" id="CHEBI:29105"/>
        <label>1</label>
        <note>catalytic</note>
    </ligand>
</feature>
<feature type="binding site" evidence="1">
    <location>
        <position position="61"/>
    </location>
    <ligand>
        <name>Zn(2+)</name>
        <dbReference type="ChEBI" id="CHEBI:29105"/>
        <label>1</label>
        <note>catalytic</note>
    </ligand>
</feature>
<feature type="binding site" evidence="1">
    <location>
        <position position="92"/>
    </location>
    <ligand>
        <name>Zn(2+)</name>
        <dbReference type="ChEBI" id="CHEBI:29105"/>
        <label>2</label>
    </ligand>
</feature>
<feature type="binding site" evidence="1">
    <location>
        <position position="95"/>
    </location>
    <ligand>
        <name>Zn(2+)</name>
        <dbReference type="ChEBI" id="CHEBI:29105"/>
        <label>2</label>
    </ligand>
</feature>
<feature type="binding site" evidence="1">
    <location>
        <position position="98"/>
    </location>
    <ligand>
        <name>Zn(2+)</name>
        <dbReference type="ChEBI" id="CHEBI:29105"/>
        <label>2</label>
    </ligand>
</feature>
<feature type="binding site" evidence="1">
    <location>
        <position position="106"/>
    </location>
    <ligand>
        <name>Zn(2+)</name>
        <dbReference type="ChEBI" id="CHEBI:29105"/>
        <label>2</label>
    </ligand>
</feature>
<feature type="binding site" evidence="1">
    <location>
        <position position="148"/>
    </location>
    <ligand>
        <name>Zn(2+)</name>
        <dbReference type="ChEBI" id="CHEBI:29105"/>
        <label>1</label>
        <note>catalytic</note>
    </ligand>
</feature>
<proteinExistence type="evidence at protein level"/>
<gene>
    <name evidence="6" type="primary">adhA</name>
    <name evidence="9" type="ordered locus">slr1192</name>
</gene>
<name>ADHA_SYNY3</name>